<feature type="chain" id="PRO_0000053599" description="Photoreceptor-specific nuclear receptor">
    <location>
        <begin position="1"/>
        <end position="410"/>
    </location>
</feature>
<feature type="domain" description="NR LBD" evidence="5">
    <location>
        <begin position="169"/>
        <end position="410"/>
    </location>
</feature>
<feature type="DNA-binding region" description="Nuclear receptor" evidence="4">
    <location>
        <begin position="44"/>
        <end position="120"/>
    </location>
</feature>
<feature type="zinc finger region" description="NR C4-type" evidence="4">
    <location>
        <begin position="47"/>
        <end position="67"/>
    </location>
</feature>
<feature type="zinc finger region" description="NR C4-type" evidence="4">
    <location>
        <begin position="83"/>
        <end position="108"/>
    </location>
</feature>
<feature type="region of interest" description="Disordered" evidence="6">
    <location>
        <begin position="118"/>
        <end position="162"/>
    </location>
</feature>
<feature type="region of interest" description="Disordered" evidence="6">
    <location>
        <begin position="193"/>
        <end position="215"/>
    </location>
</feature>
<feature type="compositionally biased region" description="Polar residues" evidence="6">
    <location>
        <begin position="118"/>
        <end position="140"/>
    </location>
</feature>
<feature type="compositionally biased region" description="Low complexity" evidence="6">
    <location>
        <begin position="153"/>
        <end position="162"/>
    </location>
</feature>
<feature type="cross-link" description="Glycyl lysine isopeptide (Lys-Gly) (interchain with G-Cter in SUMO)" evidence="1">
    <location>
        <position position="185"/>
    </location>
</feature>
<feature type="cross-link" description="Glycyl lysine isopeptide (Lys-Gly) (interchain with G-Cter in SUMO)" evidence="1">
    <location>
        <position position="330"/>
    </location>
</feature>
<feature type="cross-link" description="Glycyl lysine isopeptide (Lys-Gly) (interchain with G-Cter in SUMO)" evidence="1">
    <location>
        <position position="337"/>
    </location>
</feature>
<feature type="splice variant" id="VSP_003679" description="In isoform Short." evidence="17">
    <location>
        <begin position="368"/>
        <end position="410"/>
    </location>
</feature>
<feature type="sequence variant" id="VAR_062768" description="In RP37; uncertain significance; dbSNP:rs202098481." evidence="14">
    <original>S</original>
    <variation>L</variation>
    <location>
        <position position="44"/>
    </location>
</feature>
<feature type="sequence variant" id="VAR_037026" description="In RP37; dbSNP:rs121912631." evidence="13 15">
    <original>G</original>
    <variation>R</variation>
    <location>
        <position position="56"/>
    </location>
</feature>
<feature type="sequence variant" id="VAR_009265" description="In ESCS." evidence="7 9 10">
    <location>
        <begin position="67"/>
        <end position="69"/>
    </location>
</feature>
<feature type="sequence variant" id="VAR_009266" description="In ESCS; dbSNP:rs104894493." evidence="7">
    <original>R</original>
    <variation>Q</variation>
    <location>
        <position position="76"/>
    </location>
</feature>
<feature type="sequence variant" id="VAR_009267" description="In ESCS; dbSNP:rs104894492." evidence="7">
    <original>R</original>
    <variation>W</variation>
    <location>
        <position position="76"/>
    </location>
</feature>
<feature type="sequence variant" id="VAR_020839" description="In ESCS; dbSNP:rs1278137915." evidence="10">
    <original>G</original>
    <variation>V</variation>
    <location>
        <position position="88"/>
    </location>
</feature>
<feature type="sequence variant" id="VAR_010025" description="In ESCS; dbSNP:rs1489149705." evidence="7 9 10">
    <original>R</original>
    <variation>H</variation>
    <location>
        <position position="97"/>
    </location>
</feature>
<feature type="sequence variant" id="VAR_062769" description="In ESCS; dbSNP:rs766096417." evidence="12">
    <original>R</original>
    <variation>Q</variation>
    <location>
        <position position="104"/>
    </location>
</feature>
<feature type="sequence variant" id="VAR_010026" description="In ESCS; dbSNP:rs990307718." evidence="7 10">
    <original>R</original>
    <variation>W</variation>
    <location>
        <position position="104"/>
    </location>
</feature>
<feature type="sequence variant" id="VAR_010027" description="In ESCS; dbSNP:rs146403122." evidence="7">
    <original>E</original>
    <variation>K</variation>
    <location>
        <position position="121"/>
    </location>
</feature>
<feature type="sequence variant" id="VAR_010028" description="In dbSNP:rs1805020." evidence="7 14">
    <original>E</original>
    <variation>G</variation>
    <location>
        <position position="140"/>
    </location>
</feature>
<feature type="sequence variant" id="VAR_010029" description="In dbSNP:rs1805021." evidence="7 14">
    <original>M</original>
    <variation>T</variation>
    <location>
        <position position="163"/>
    </location>
</feature>
<feature type="sequence variant" id="VAR_010030" description="In dbSNP:rs1805023." evidence="7">
    <original>V</original>
    <variation>I</variation>
    <location>
        <position position="232"/>
    </location>
</feature>
<feature type="sequence variant" id="VAR_010031" description="In ESCS; dbSNP:rs1200322637." evidence="7 10">
    <original>W</original>
    <variation>S</variation>
    <location>
        <position position="234"/>
    </location>
</feature>
<feature type="sequence variant" id="VAR_020840" description="In ESCS; dbSNP:rs377257254." evidence="9 10">
    <original>A</original>
    <variation>E</variation>
    <location>
        <position position="256"/>
    </location>
</feature>
<feature type="sequence variant" id="VAR_020841" description="In ESCS; impairs protein folding; dbSNP:rs2054201996." evidence="10 16">
    <original>L</original>
    <variation>P</variation>
    <location>
        <position position="263"/>
    </location>
</feature>
<feature type="sequence variant" id="VAR_062770" description="In RP37; uncertain significance; dbSNP:rs764901119." evidence="14">
    <original>G</original>
    <variation>S</variation>
    <location>
        <position position="287"/>
    </location>
</feature>
<feature type="sequence variant" id="VAR_010032" description="In dbSNP:rs1805025." evidence="7">
    <original>V</original>
    <variation>I</variation>
    <location>
        <position position="302"/>
    </location>
</feature>
<feature type="sequence variant" id="VAR_010033" description="In ESCS; impairs protein folding and stability; dbSNP:rs774102273." evidence="7 10 16">
    <original>R</original>
    <variation>G</variation>
    <location>
        <position position="309"/>
    </location>
</feature>
<feature type="sequence variant" id="VAR_010034" description="In ESCS; impairs protein folding and stability and hinders the ability to form stable dimers; dbSNP:rs28937873." evidence="7 8 9 10 14 15 16">
    <original>R</original>
    <variation>Q</variation>
    <location>
        <position position="311"/>
    </location>
</feature>
<feature type="sequence variant" id="VAR_062771" description="In RP37; uncertain significance." evidence="14">
    <original>K</original>
    <variation>R</variation>
    <location>
        <position position="324"/>
    </location>
</feature>
<feature type="sequence variant" id="VAR_062772" description="In ESCS; impairs protein folding and stability." evidence="12 16">
    <original>R</original>
    <variation>G</variation>
    <location>
        <position position="334"/>
    </location>
</feature>
<feature type="sequence variant" id="VAR_020842" description="In ESCS; impairs protein folding and stability; dbSNP:rs752883545." evidence="10 16">
    <original>L</original>
    <variation>P</variation>
    <location>
        <position position="336"/>
    </location>
</feature>
<feature type="sequence variant" id="VAR_020843" description="In ESCS; impairs protein folding and stability." evidence="10 16">
    <original>L</original>
    <variation>V</variation>
    <location>
        <position position="353"/>
    </location>
</feature>
<feature type="sequence variant" id="VAR_010035" description="In ESCS; dbSNP:rs766769900." evidence="7">
    <original>R</original>
    <variation>P</variation>
    <location>
        <position position="385"/>
    </location>
</feature>
<feature type="sequence variant" id="VAR_010036" description="In ESCS; impairs protein folding and stability; dbSNP:rs1303613101." evidence="7 10 16">
    <original>M</original>
    <variation>K</variation>
    <location>
        <position position="407"/>
    </location>
</feature>
<feature type="mutagenesis site" description="Reduces transcription repressor activity." evidence="16">
    <original>L</original>
    <variation>R</variation>
    <location>
        <position position="372"/>
    </location>
</feature>
<feature type="mutagenesis site" description="Reduces transcription repressor activity." evidence="16">
    <original>L</original>
    <variation>R</variation>
    <location>
        <position position="375"/>
    </location>
</feature>
<feature type="strand" evidence="19">
    <location>
        <begin position="217"/>
        <end position="219"/>
    </location>
</feature>
<feature type="helix" evidence="19">
    <location>
        <begin position="220"/>
        <end position="237"/>
    </location>
</feature>
<feature type="helix" evidence="19">
    <location>
        <begin position="239"/>
        <end position="242"/>
    </location>
</feature>
<feature type="helix" evidence="19">
    <location>
        <begin position="246"/>
        <end position="255"/>
    </location>
</feature>
<feature type="helix" evidence="19">
    <location>
        <begin position="257"/>
        <end position="268"/>
    </location>
</feature>
<feature type="strand" evidence="19">
    <location>
        <begin position="270"/>
        <end position="273"/>
    </location>
</feature>
<feature type="helix" evidence="19">
    <location>
        <begin position="295"/>
        <end position="312"/>
    </location>
</feature>
<feature type="helix" evidence="19">
    <location>
        <begin position="317"/>
        <end position="328"/>
    </location>
</feature>
<feature type="helix" evidence="19">
    <location>
        <begin position="339"/>
        <end position="360"/>
    </location>
</feature>
<feature type="helix" evidence="19">
    <location>
        <begin position="367"/>
        <end position="372"/>
    </location>
</feature>
<feature type="helix" evidence="19">
    <location>
        <begin position="373"/>
        <end position="376"/>
    </location>
</feature>
<feature type="helix" evidence="19">
    <location>
        <begin position="377"/>
        <end position="380"/>
    </location>
</feature>
<feature type="helix" evidence="19">
    <location>
        <begin position="383"/>
        <end position="390"/>
    </location>
</feature>
<feature type="helix" evidence="19">
    <location>
        <begin position="399"/>
        <end position="408"/>
    </location>
</feature>
<keyword id="KW-0002">3D-structure</keyword>
<keyword id="KW-0025">Alternative splicing</keyword>
<keyword id="KW-0225">Disease variant</keyword>
<keyword id="KW-0238">DNA-binding</keyword>
<keyword id="KW-1017">Isopeptide bond</keyword>
<keyword id="KW-0479">Metal-binding</keyword>
<keyword id="KW-0539">Nucleus</keyword>
<keyword id="KW-1267">Proteomics identification</keyword>
<keyword id="KW-0675">Receptor</keyword>
<keyword id="KW-1185">Reference proteome</keyword>
<keyword id="KW-0678">Repressor</keyword>
<keyword id="KW-0682">Retinitis pigmentosa</keyword>
<keyword id="KW-0716">Sensory transduction</keyword>
<keyword id="KW-0804">Transcription</keyword>
<keyword id="KW-0805">Transcription regulation</keyword>
<keyword id="KW-0832">Ubl conjugation</keyword>
<keyword id="KW-0844">Vision</keyword>
<keyword id="KW-0862">Zinc</keyword>
<keyword id="KW-0863">Zinc-finger</keyword>
<evidence type="ECO:0000250" key="1"/>
<evidence type="ECO:0000250" key="2">
    <source>
        <dbReference type="UniProtKB" id="Q9QXZ7"/>
    </source>
</evidence>
<evidence type="ECO:0000250" key="3">
    <source>
        <dbReference type="UniProtKB" id="Q9TTF0"/>
    </source>
</evidence>
<evidence type="ECO:0000255" key="4">
    <source>
        <dbReference type="PROSITE-ProRule" id="PRU00407"/>
    </source>
</evidence>
<evidence type="ECO:0000255" key="5">
    <source>
        <dbReference type="PROSITE-ProRule" id="PRU01189"/>
    </source>
</evidence>
<evidence type="ECO:0000256" key="6">
    <source>
        <dbReference type="SAM" id="MobiDB-lite"/>
    </source>
</evidence>
<evidence type="ECO:0000269" key="7">
    <source>
    </source>
</evidence>
<evidence type="ECO:0000269" key="8">
    <source>
    </source>
</evidence>
<evidence type="ECO:0000269" key="9">
    <source>
    </source>
</evidence>
<evidence type="ECO:0000269" key="10">
    <source>
    </source>
</evidence>
<evidence type="ECO:0000269" key="11">
    <source>
    </source>
</evidence>
<evidence type="ECO:0000269" key="12">
    <source>
    </source>
</evidence>
<evidence type="ECO:0000269" key="13">
    <source>
    </source>
</evidence>
<evidence type="ECO:0000269" key="14">
    <source>
    </source>
</evidence>
<evidence type="ECO:0000269" key="15">
    <source>
    </source>
</evidence>
<evidence type="ECO:0000269" key="16">
    <source>
    </source>
</evidence>
<evidence type="ECO:0000303" key="17">
    <source>
    </source>
</evidence>
<evidence type="ECO:0000305" key="18"/>
<evidence type="ECO:0007829" key="19">
    <source>
        <dbReference type="PDB" id="4LOG"/>
    </source>
</evidence>
<comment type="function">
    <text evidence="11 16">Orphan nuclear receptor of retinal photoreceptor cells. Transcriptional factor that is an activator of rod development and repressor of cone development. Binds the promoter region of a number of rod- and cone-specific genes, including rhodopsin, M- and S-opsin and rod-specific phosphodiesterase beta subunit. Enhances rhodopsin expression. Represses M- and S-cone opsin expression.</text>
</comment>
<comment type="subunit">
    <text evidence="2 3 11 16">Homodimer (PubMed:24069298). Interacts with PIAS3; the interaction sumoylates NR2E3 and promotes repression of cone-specific gene transcription and activation of rod-specific genes (By similarity). Component of a complex that includes NR2E3, NRL, CRX and NR1D1 (By similarity). Interacts with NR1D1 (By similarity). Interacts (via the DNA-binding domain) with CRX (via its DNA binding domain); the interaction represses S- and M-cone opsin expression (PubMed:15689355). Interacts with SAMD7 (By similarity).</text>
</comment>
<comment type="interaction">
    <interactant intactId="EBI-7216962">
        <id>Q9Y5X4</id>
    </interactant>
    <interactant intactId="EBI-540834">
        <id>P61964</id>
        <label>WDR5</label>
    </interactant>
    <organismsDiffer>false</organismsDiffer>
    <experiments>5</experiments>
</comment>
<comment type="subcellular location">
    <subcellularLocation>
        <location evidence="4 11">Nucleus</location>
    </subcellularLocation>
</comment>
<comment type="alternative products">
    <event type="alternative splicing"/>
    <isoform>
        <id>Q9Y5X4-1</id>
        <name>Long</name>
        <sequence type="displayed"/>
    </isoform>
    <isoform>
        <id>Q9Y5X4-2</id>
        <name>Short</name>
        <sequence type="described" ref="VSP_003679"/>
    </isoform>
</comment>
<comment type="tissue specificity">
    <text evidence="11">Eye specific; found solely in the outer nuclear layer of the adult neurosensory retina, where the nuclei of cone and rod photoreceptors reside.</text>
</comment>
<comment type="PTM">
    <text evidence="1">Di- and tri-sumoylated in developing retina. PIAS3-mediated sumoylation promotes repression of cone-specific gene expression and activation of rod-specific genes. Sumoylation on Lys-185 appears to be the main site (By similarity).</text>
</comment>
<comment type="disease" evidence="7 8 9 10 12 14 15 16">
    <disease id="DI-01527">
        <name>Enhanced S cone syndrome</name>
        <acronym>ESCS</acronym>
        <description>Autosomal recessive retinopathy in which patients have increased sensitivity to blue light; perception of blue light is mediated by what is normally the least populous cone photoreceptor subtype, the S (short wavelength, blue) cones. ESCS is also associated with visual loss, with night blindness occurring from early in life, varying degrees of L (long, red)- and M (middle, green)-cone vision, and retinal degeneration.</description>
        <dbReference type="MIM" id="268100"/>
    </disease>
    <text>The disease is caused by variants affecting the gene represented in this entry.</text>
</comment>
<comment type="disease" evidence="13 14 15">
    <disease id="DI-00993">
        <name>Retinitis pigmentosa 37</name>
        <acronym>RP37</acronym>
        <description>A retinal dystrophy belonging to the group of pigmentary retinopathies. Retinitis pigmentosa is characterized by retinal pigment deposits visible on fundus examination and primary loss of rod photoreceptor cells followed by secondary loss of cone photoreceptors. Patients typically have night vision blindness and loss of midperipheral visual field. As their condition progresses, they lose their far peripheral visual field and eventually central vision as well.</description>
        <dbReference type="MIM" id="611131"/>
    </disease>
    <text>The disease is caused by variants affecting the gene represented in this entry.</text>
</comment>
<comment type="similarity">
    <text evidence="18">Belongs to the nuclear hormone receptor family. NR2 subfamily.</text>
</comment>
<proteinExistence type="evidence at protein level"/>
<dbReference type="EMBL" id="AF121129">
    <property type="protein sequence ID" value="AAD28301.1"/>
    <property type="molecule type" value="mRNA"/>
</dbReference>
<dbReference type="EMBL" id="AF148128">
    <property type="protein sequence ID" value="AAF22227.1"/>
    <property type="molecule type" value="mRNA"/>
</dbReference>
<dbReference type="EMBL" id="AJ276674">
    <property type="protein sequence ID" value="CAB82769.1"/>
    <property type="molecule type" value="Genomic_DNA"/>
</dbReference>
<dbReference type="EMBL" id="AB307710">
    <property type="protein sequence ID" value="BAH02301.1"/>
    <property type="molecule type" value="mRNA"/>
</dbReference>
<dbReference type="EMBL" id="CH471082">
    <property type="protein sequence ID" value="EAW77876.1"/>
    <property type="molecule type" value="Genomic_DNA"/>
</dbReference>
<dbReference type="CCDS" id="CCDS73750.1">
    <molecule id="Q9Y5X4-1"/>
</dbReference>
<dbReference type="CCDS" id="CCDS73751.1">
    <molecule id="Q9Y5X4-2"/>
</dbReference>
<dbReference type="RefSeq" id="NP_055064.1">
    <molecule id="Q9Y5X4-1"/>
    <property type="nucleotide sequence ID" value="NM_014249.4"/>
</dbReference>
<dbReference type="RefSeq" id="NP_057430.1">
    <molecule id="Q9Y5X4-2"/>
    <property type="nucleotide sequence ID" value="NM_016346.4"/>
</dbReference>
<dbReference type="PDB" id="4LOG">
    <property type="method" value="X-ray"/>
    <property type="resolution" value="2.70 A"/>
    <property type="chains" value="A/B=217-410"/>
</dbReference>
<dbReference type="PDBsum" id="4LOG"/>
<dbReference type="SMR" id="Q9Y5X4"/>
<dbReference type="BioGRID" id="115320">
    <property type="interactions" value="20"/>
</dbReference>
<dbReference type="CORUM" id="Q9Y5X4"/>
<dbReference type="FunCoup" id="Q9Y5X4">
    <property type="interactions" value="1266"/>
</dbReference>
<dbReference type="IntAct" id="Q9Y5X4">
    <property type="interactions" value="12"/>
</dbReference>
<dbReference type="STRING" id="9606.ENSP00000482504"/>
<dbReference type="BindingDB" id="Q9Y5X4"/>
<dbReference type="ChEMBL" id="CHEMBL4374"/>
<dbReference type="GlyGen" id="Q9Y5X4">
    <property type="glycosylation" value="3 sites, 1 O-linked glycan (2 sites)"/>
</dbReference>
<dbReference type="iPTMnet" id="Q9Y5X4"/>
<dbReference type="PhosphoSitePlus" id="Q9Y5X4"/>
<dbReference type="BioMuta" id="NR2E3"/>
<dbReference type="DMDM" id="8928275"/>
<dbReference type="jPOST" id="Q9Y5X4"/>
<dbReference type="MassIVE" id="Q9Y5X4"/>
<dbReference type="PaxDb" id="9606-ENSP00000482504"/>
<dbReference type="PeptideAtlas" id="Q9Y5X4"/>
<dbReference type="ProteomicsDB" id="86529">
    <molecule id="Q9Y5X4-1"/>
</dbReference>
<dbReference type="ProteomicsDB" id="86530">
    <molecule id="Q9Y5X4-2"/>
</dbReference>
<dbReference type="Pumba" id="Q9Y5X4"/>
<dbReference type="Antibodypedia" id="72976">
    <property type="antibodies" value="436 antibodies from 30 providers"/>
</dbReference>
<dbReference type="DNASU" id="10002"/>
<dbReference type="Ensembl" id="ENST00000617575.5">
    <molecule id="Q9Y5X4-1"/>
    <property type="protein sequence ID" value="ENSP00000482504.1"/>
    <property type="gene ID" value="ENSG00000278570.5"/>
</dbReference>
<dbReference type="Ensembl" id="ENST00000621098.1">
    <molecule id="Q9Y5X4-2"/>
    <property type="protein sequence ID" value="ENSP00000479962.1"/>
    <property type="gene ID" value="ENSG00000278570.5"/>
</dbReference>
<dbReference type="GeneID" id="10002"/>
<dbReference type="KEGG" id="hsa:10002"/>
<dbReference type="MANE-Select" id="ENST00000617575.5">
    <property type="protein sequence ID" value="ENSP00000482504.1"/>
    <property type="RefSeq nucleotide sequence ID" value="NM_014249.4"/>
    <property type="RefSeq protein sequence ID" value="NP_055064.1"/>
</dbReference>
<dbReference type="UCSC" id="uc032cik.2">
    <molecule id="Q9Y5X4-1"/>
    <property type="organism name" value="human"/>
</dbReference>
<dbReference type="AGR" id="HGNC:7974"/>
<dbReference type="CTD" id="10002"/>
<dbReference type="DisGeNET" id="10002"/>
<dbReference type="GeneCards" id="NR2E3"/>
<dbReference type="GeneReviews" id="NR2E3"/>
<dbReference type="HGNC" id="HGNC:7974">
    <property type="gene designation" value="NR2E3"/>
</dbReference>
<dbReference type="HPA" id="ENSG00000278570">
    <property type="expression patterns" value="Tissue enriched (retina)"/>
</dbReference>
<dbReference type="MalaCards" id="NR2E3"/>
<dbReference type="MIM" id="268100">
    <property type="type" value="phenotype"/>
</dbReference>
<dbReference type="MIM" id="604485">
    <property type="type" value="gene"/>
</dbReference>
<dbReference type="MIM" id="611131">
    <property type="type" value="phenotype"/>
</dbReference>
<dbReference type="neXtProt" id="NX_Q9Y5X4"/>
<dbReference type="OpenTargets" id="ENSG00000278570"/>
<dbReference type="Orphanet" id="53540">
    <property type="disease" value="Goldmann-Favre syndrome"/>
</dbReference>
<dbReference type="Orphanet" id="791">
    <property type="disease" value="Retinitis pigmentosa"/>
</dbReference>
<dbReference type="PharmGKB" id="PA31757"/>
<dbReference type="VEuPathDB" id="HostDB:ENSG00000278570"/>
<dbReference type="eggNOG" id="KOG3575">
    <property type="taxonomic scope" value="Eukaryota"/>
</dbReference>
<dbReference type="GeneTree" id="ENSGT00940000156926"/>
<dbReference type="HOGENOM" id="CLU_007368_20_3_1"/>
<dbReference type="InParanoid" id="Q9Y5X4"/>
<dbReference type="OMA" id="HLTKIPM"/>
<dbReference type="OrthoDB" id="5774777at2759"/>
<dbReference type="PAN-GO" id="Q9Y5X4">
    <property type="GO annotations" value="6 GO annotations based on evolutionary models"/>
</dbReference>
<dbReference type="PhylomeDB" id="Q9Y5X4"/>
<dbReference type="PathwayCommons" id="Q9Y5X4"/>
<dbReference type="Reactome" id="R-HSA-383280">
    <property type="pathway name" value="Nuclear Receptor transcription pathway"/>
</dbReference>
<dbReference type="SignaLink" id="Q9Y5X4"/>
<dbReference type="SIGNOR" id="Q9Y5X4"/>
<dbReference type="BioGRID-ORCS" id="10002">
    <property type="hits" value="9 hits in 290 CRISPR screens"/>
</dbReference>
<dbReference type="EvolutionaryTrace" id="Q9Y5X4"/>
<dbReference type="GeneWiki" id="Photoreceptor_cell-specific_nuclear_receptor"/>
<dbReference type="GenomeRNAi" id="10002"/>
<dbReference type="Pharos" id="Q9Y5X4">
    <property type="development level" value="Tchem"/>
</dbReference>
<dbReference type="PRO" id="PR:Q9Y5X4"/>
<dbReference type="Proteomes" id="UP000005640">
    <property type="component" value="Chromosome 15"/>
</dbReference>
<dbReference type="RNAct" id="Q9Y5X4">
    <property type="molecule type" value="protein"/>
</dbReference>
<dbReference type="Bgee" id="ENSG00000278570">
    <property type="expression patterns" value="Expressed in buccal mucosa cell and 126 other cell types or tissues"/>
</dbReference>
<dbReference type="ExpressionAtlas" id="Q9Y5X4">
    <property type="expression patterns" value="baseline and differential"/>
</dbReference>
<dbReference type="GO" id="GO:0005654">
    <property type="term" value="C:nucleoplasm"/>
    <property type="evidence" value="ECO:0000304"/>
    <property type="project" value="Reactome"/>
</dbReference>
<dbReference type="GO" id="GO:0005634">
    <property type="term" value="C:nucleus"/>
    <property type="evidence" value="ECO:0000304"/>
    <property type="project" value="ProtInc"/>
</dbReference>
<dbReference type="GO" id="GO:0005667">
    <property type="term" value="C:transcription regulator complex"/>
    <property type="evidence" value="ECO:0007669"/>
    <property type="project" value="Ensembl"/>
</dbReference>
<dbReference type="GO" id="GO:0001228">
    <property type="term" value="F:DNA-binding transcription activator activity, RNA polymerase II-specific"/>
    <property type="evidence" value="ECO:0000315"/>
    <property type="project" value="NTNU_SB"/>
</dbReference>
<dbReference type="GO" id="GO:0004879">
    <property type="term" value="F:nuclear receptor activity"/>
    <property type="evidence" value="ECO:0000318"/>
    <property type="project" value="GO_Central"/>
</dbReference>
<dbReference type="GO" id="GO:0003707">
    <property type="term" value="F:nuclear steroid receptor activity"/>
    <property type="evidence" value="ECO:0007669"/>
    <property type="project" value="InterPro"/>
</dbReference>
<dbReference type="GO" id="GO:0000978">
    <property type="term" value="F:RNA polymerase II cis-regulatory region sequence-specific DNA binding"/>
    <property type="evidence" value="ECO:0000314"/>
    <property type="project" value="NTNU_SB"/>
</dbReference>
<dbReference type="GO" id="GO:0043565">
    <property type="term" value="F:sequence-specific DNA binding"/>
    <property type="evidence" value="ECO:0000314"/>
    <property type="project" value="NTNU_SB"/>
</dbReference>
<dbReference type="GO" id="GO:0008270">
    <property type="term" value="F:zinc ion binding"/>
    <property type="evidence" value="ECO:0007669"/>
    <property type="project" value="UniProtKB-KW"/>
</dbReference>
<dbReference type="GO" id="GO:0008283">
    <property type="term" value="P:cell population proliferation"/>
    <property type="evidence" value="ECO:0007669"/>
    <property type="project" value="Ensembl"/>
</dbReference>
<dbReference type="GO" id="GO:0042462">
    <property type="term" value="P:eye photoreceptor cell development"/>
    <property type="evidence" value="ECO:0007669"/>
    <property type="project" value="Ensembl"/>
</dbReference>
<dbReference type="GO" id="GO:0008285">
    <property type="term" value="P:negative regulation of cell population proliferation"/>
    <property type="evidence" value="ECO:0007669"/>
    <property type="project" value="Ensembl"/>
</dbReference>
<dbReference type="GO" id="GO:0000122">
    <property type="term" value="P:negative regulation of transcription by RNA polymerase II"/>
    <property type="evidence" value="ECO:0007669"/>
    <property type="project" value="Ensembl"/>
</dbReference>
<dbReference type="GO" id="GO:0030182">
    <property type="term" value="P:neuron differentiation"/>
    <property type="evidence" value="ECO:0000318"/>
    <property type="project" value="GO_Central"/>
</dbReference>
<dbReference type="GO" id="GO:0007602">
    <property type="term" value="P:phototransduction"/>
    <property type="evidence" value="ECO:0000304"/>
    <property type="project" value="ProtInc"/>
</dbReference>
<dbReference type="GO" id="GO:0010628">
    <property type="term" value="P:positive regulation of gene expression"/>
    <property type="evidence" value="ECO:0007669"/>
    <property type="project" value="Ensembl"/>
</dbReference>
<dbReference type="GO" id="GO:0045944">
    <property type="term" value="P:positive regulation of transcription by RNA polymerase II"/>
    <property type="evidence" value="ECO:0000314"/>
    <property type="project" value="NTNU_SB"/>
</dbReference>
<dbReference type="GO" id="GO:0060041">
    <property type="term" value="P:retina development in camera-type eye"/>
    <property type="evidence" value="ECO:0007669"/>
    <property type="project" value="Ensembl"/>
</dbReference>
<dbReference type="GO" id="GO:0007165">
    <property type="term" value="P:signal transduction"/>
    <property type="evidence" value="ECO:0000304"/>
    <property type="project" value="ProtInc"/>
</dbReference>
<dbReference type="GO" id="GO:0007601">
    <property type="term" value="P:visual perception"/>
    <property type="evidence" value="ECO:0000304"/>
    <property type="project" value="ProtInc"/>
</dbReference>
<dbReference type="CDD" id="cd06970">
    <property type="entry name" value="NR_DBD_PNR"/>
    <property type="match status" value="1"/>
</dbReference>
<dbReference type="CDD" id="cd06950">
    <property type="entry name" value="NR_LBD_Tlx_PNR_like"/>
    <property type="match status" value="1"/>
</dbReference>
<dbReference type="FunFam" id="1.10.565.10:FF:000022">
    <property type="entry name" value="Nuclear receptor subfamily 2 group E member 3"/>
    <property type="match status" value="1"/>
</dbReference>
<dbReference type="FunFam" id="3.30.50.10:FF:000028">
    <property type="entry name" value="Nuclear receptor subfamily 2, group E, member 3"/>
    <property type="match status" value="1"/>
</dbReference>
<dbReference type="Gene3D" id="3.30.50.10">
    <property type="entry name" value="Erythroid Transcription Factor GATA-1, subunit A"/>
    <property type="match status" value="1"/>
</dbReference>
<dbReference type="Gene3D" id="1.10.565.10">
    <property type="entry name" value="Retinoid X Receptor"/>
    <property type="match status" value="1"/>
</dbReference>
<dbReference type="InterPro" id="IPR035500">
    <property type="entry name" value="NHR-like_dom_sf"/>
</dbReference>
<dbReference type="InterPro" id="IPR000536">
    <property type="entry name" value="Nucl_hrmn_rcpt_lig-bd"/>
</dbReference>
<dbReference type="InterPro" id="IPR050274">
    <property type="entry name" value="Nuclear_hormone_rcpt_NR2"/>
</dbReference>
<dbReference type="InterPro" id="IPR001723">
    <property type="entry name" value="Nuclear_hrmn_rcpt"/>
</dbReference>
<dbReference type="InterPro" id="IPR000003">
    <property type="entry name" value="Retinoid-X_rcpt/HNF4"/>
</dbReference>
<dbReference type="InterPro" id="IPR001628">
    <property type="entry name" value="Znf_hrmn_rcpt"/>
</dbReference>
<dbReference type="InterPro" id="IPR013088">
    <property type="entry name" value="Znf_NHR/GATA"/>
</dbReference>
<dbReference type="PANTHER" id="PTHR24083">
    <property type="entry name" value="NUCLEAR HORMONE RECEPTOR"/>
    <property type="match status" value="1"/>
</dbReference>
<dbReference type="Pfam" id="PF00104">
    <property type="entry name" value="Hormone_recep"/>
    <property type="match status" value="1"/>
</dbReference>
<dbReference type="Pfam" id="PF00105">
    <property type="entry name" value="zf-C4"/>
    <property type="match status" value="1"/>
</dbReference>
<dbReference type="PRINTS" id="PR00545">
    <property type="entry name" value="RETINOIDXR"/>
</dbReference>
<dbReference type="PRINTS" id="PR00398">
    <property type="entry name" value="STRDHORMONER"/>
</dbReference>
<dbReference type="PRINTS" id="PR00047">
    <property type="entry name" value="STROIDFINGER"/>
</dbReference>
<dbReference type="SMART" id="SM00430">
    <property type="entry name" value="HOLI"/>
    <property type="match status" value="1"/>
</dbReference>
<dbReference type="SMART" id="SM00399">
    <property type="entry name" value="ZnF_C4"/>
    <property type="match status" value="1"/>
</dbReference>
<dbReference type="SUPFAM" id="SSF57716">
    <property type="entry name" value="Glucocorticoid receptor-like (DNA-binding domain)"/>
    <property type="match status" value="1"/>
</dbReference>
<dbReference type="SUPFAM" id="SSF48508">
    <property type="entry name" value="Nuclear receptor ligand-binding domain"/>
    <property type="match status" value="1"/>
</dbReference>
<dbReference type="PROSITE" id="PS51843">
    <property type="entry name" value="NR_LBD"/>
    <property type="match status" value="1"/>
</dbReference>
<dbReference type="PROSITE" id="PS00031">
    <property type="entry name" value="NUCLEAR_REC_DBD_1"/>
    <property type="match status" value="1"/>
</dbReference>
<dbReference type="PROSITE" id="PS51030">
    <property type="entry name" value="NUCLEAR_REC_DBD_2"/>
    <property type="match status" value="1"/>
</dbReference>
<reference key="1">
    <citation type="journal article" date="1999" name="Proc. Natl. Acad. Sci. U.S.A.">
        <title>Identification of a photoreceptor cell-specific nuclear receptor.</title>
        <authorList>
            <person name="Kobayashi M."/>
            <person name="Takezawa S."/>
            <person name="Hara K."/>
            <person name="Yu R.T."/>
            <person name="Umesono Y."/>
            <person name="Agata K."/>
            <person name="Taniwaki M."/>
            <person name="Yasuda K."/>
            <person name="Umesono K."/>
        </authorList>
    </citation>
    <scope>NUCLEOTIDE SEQUENCE [MRNA] (ISOFORM LONG)</scope>
    <source>
        <tissue>Retinoblastoma</tissue>
    </source>
</reference>
<reference key="2">
    <citation type="journal article" date="1999" name="Proc. Natl. Acad. Sci. U.S.A.">
        <title>Retina-specific nuclear receptor: a potential regulator of cellular retinaldehyde-binding protein expressed in retinal pigment epithelium and Muller glial cells.</title>
        <authorList>
            <person name="Chen F."/>
            <person name="Figueroa D.J."/>
            <person name="Marmorstein A.D."/>
            <person name="Zhang Q."/>
            <person name="Petrukhin K."/>
            <person name="Caskey C.T."/>
            <person name="Austin C.P."/>
        </authorList>
    </citation>
    <scope>NUCLEOTIDE SEQUENCE [MRNA] (ISOFORM SHORT)</scope>
    <source>
        <tissue>Retina</tissue>
    </source>
</reference>
<reference key="3">
    <citation type="submission" date="2000-03" db="EMBL/GenBank/DDBJ databases">
        <title>Assignment of the photoreceptor-specific nuclear receptor (PNR) gene to 15q22.32-q24.1 in the Bardet-Biedl Syndrome (BBS4) region.</title>
        <authorList>
            <person name="Rendtorf N."/>
            <person name="Vissing H."/>
            <person name="Shilahtaroglu A."/>
            <person name="Tommerup N."/>
        </authorList>
    </citation>
    <scope>NUCLEOTIDE SEQUENCE [GENOMIC DNA] (ISOFORM LONG)</scope>
</reference>
<reference key="4">
    <citation type="submission" date="2008-12" db="EMBL/GenBank/DDBJ databases">
        <title>Comprehensive DNA-binding analysis of human hormone nuclear receptors by fluorescence correlation spectroscopy based on cell-free system.</title>
        <authorList>
            <person name="Kobayashi T."/>
            <person name="Kodani Y."/>
            <person name="Sawasaki T."/>
            <person name="Endo Y."/>
        </authorList>
    </citation>
    <scope>NUCLEOTIDE SEQUENCE [MRNA]</scope>
</reference>
<reference key="5">
    <citation type="submission" date="2005-07" db="EMBL/GenBank/DDBJ databases">
        <authorList>
            <person name="Mural R.J."/>
            <person name="Istrail S."/>
            <person name="Sutton G.G."/>
            <person name="Florea L."/>
            <person name="Halpern A.L."/>
            <person name="Mobarry C.M."/>
            <person name="Lippert R."/>
            <person name="Walenz B."/>
            <person name="Shatkay H."/>
            <person name="Dew I."/>
            <person name="Miller J.R."/>
            <person name="Flanigan M.J."/>
            <person name="Edwards N.J."/>
            <person name="Bolanos R."/>
            <person name="Fasulo D."/>
            <person name="Halldorsson B.V."/>
            <person name="Hannenhalli S."/>
            <person name="Turner R."/>
            <person name="Yooseph S."/>
            <person name="Lu F."/>
            <person name="Nusskern D.R."/>
            <person name="Shue B.C."/>
            <person name="Zheng X.H."/>
            <person name="Zhong F."/>
            <person name="Delcher A.L."/>
            <person name="Huson D.H."/>
            <person name="Kravitz S.A."/>
            <person name="Mouchard L."/>
            <person name="Reinert K."/>
            <person name="Remington K.A."/>
            <person name="Clark A.G."/>
            <person name="Waterman M.S."/>
            <person name="Eichler E.E."/>
            <person name="Adams M.D."/>
            <person name="Hunkapiller M.W."/>
            <person name="Myers E.W."/>
            <person name="Venter J.C."/>
        </authorList>
    </citation>
    <scope>NUCLEOTIDE SEQUENCE [LARGE SCALE GENOMIC DNA]</scope>
</reference>
<reference key="6">
    <citation type="journal article" date="2005" name="Hum. Mol. Genet.">
        <title>The photoreceptor-specific nuclear receptor Nr2e3 interacts with Crx and exerts opposing effects on the transcription of rod versus cone genes.</title>
        <authorList>
            <person name="Peng G.H."/>
            <person name="Ahmad O."/>
            <person name="Ahmad F."/>
            <person name="Liu J."/>
            <person name="Chen S."/>
        </authorList>
    </citation>
    <scope>INTERACTION WITH CRX</scope>
    <scope>SUBCELLULAR LOCATION</scope>
    <scope>TISSUE SPECIFICITY</scope>
    <scope>FUNCTION</scope>
</reference>
<reference key="7">
    <citation type="journal article" date="2013" name="PLoS ONE">
        <title>The crystal structure of the orphan nuclear receptor NR2E3/PNR ligand binding domain reveals a dimeric auto-repressed conformation.</title>
        <authorList>
            <person name="Tan M.H."/>
            <person name="Zhou X.E."/>
            <person name="Soon F.F."/>
            <person name="Li X."/>
            <person name="Li J."/>
            <person name="Yong E.L."/>
            <person name="Melcher K."/>
            <person name="Xu H.E."/>
        </authorList>
    </citation>
    <scope>X-RAY CRYSTALLOGRAPHY (2.7 ANGSTROMS) OF 217-410</scope>
    <scope>SUBUNIT</scope>
    <scope>MUTAGENESIS OF LEU-372 AND LEU-375</scope>
    <scope>FUNCTION</scope>
    <scope>CHARACTERIZATION OF VARIANT ASSOCIATED WITH ESCS GLY-334</scope>
    <scope>CHARACTERIZATION OF VARIANTS ESCS PRO-263; GLY-309; GLN-311; PRO-336; VAL-353 AND LYS-407</scope>
</reference>
<reference key="8">
    <citation type="journal article" date="2000" name="Hum. Genet.">
        <title>The photoreceptor cell-specific nuclear receptor gene (PNR) accounts for retinitis pigmentosa in the Crypto-Jews from Portugal (Marranos), survivors from the Spanish Inquisition.</title>
        <authorList>
            <person name="Gerber S."/>
            <person name="Rozet J.-M."/>
            <person name="Takezawa S."/>
            <person name="dos Santos L.C."/>
            <person name="Lopes L."/>
            <person name="Gribouval O."/>
            <person name="Penet C."/>
            <person name="Perrault I."/>
            <person name="Ducroq D."/>
            <person name="Souied E."/>
            <person name="Jeanpierre M."/>
            <person name="Romana S."/>
            <person name="Frezal J."/>
            <person name="Ferraz F."/>
            <person name="Yu-Umesono R."/>
            <person name="Munnich A."/>
            <person name="Kaplan J."/>
        </authorList>
    </citation>
    <scope>VARIANT ESCS GLN-311</scope>
    <scope>CHARACTERIZATION OF VARIANT ESCS GLN-311</scope>
</reference>
<reference key="9">
    <citation type="journal article" date="2000" name="Nat. Genet.">
        <title>Mutation of a nuclear receptor gene, NR2E3, causes enhanced S cone syndrome, a disorder of retinal cell fate.</title>
        <authorList>
            <person name="Haider N.B."/>
            <person name="Jacobson S.G."/>
            <person name="Cideciyan A.V."/>
            <person name="Swiderski R."/>
            <person name="Streb L.M."/>
            <person name="Searby C."/>
            <person name="Beck G."/>
            <person name="Hockey R."/>
            <person name="Hanna D.B."/>
            <person name="Gorman S."/>
            <person name="Duhl D."/>
            <person name="Carmi R."/>
            <person name="Bennett J."/>
            <person name="Weleber R.G."/>
            <person name="Fishman G.A."/>
            <person name="Wright A.F."/>
            <person name="Stone E.M."/>
            <person name="Sheffield V.C."/>
        </authorList>
    </citation>
    <scope>VARIANTS ESCS 67-CYS--GLY-69 DEL; GLN-76; TRP-76; HIS-97; TRP-104; LYS-121; SER-234; GLY-309; GLN-311; PRO-385 AND LYS-407</scope>
    <scope>VARIANTS GLY-140; THR-163; ILE-232 AND ILE-302</scope>
</reference>
<reference key="10">
    <citation type="journal article" date="2003" name="Arch. Ophthalmol.">
        <title>Shared mutations in NR2E3 in enhanced S-cone syndrome, Goldmann-Favre syndrome, and many cases of clumped pigmentary retinal degeneration.</title>
        <authorList>
            <person name="Sharon D."/>
            <person name="Sandberg M.A."/>
            <person name="Caruso R.C."/>
            <person name="Berson E.L."/>
            <person name="Dryja T.P."/>
        </authorList>
    </citation>
    <scope>VARIANTS ESCS 67-CYS--GLY-69 DEL; HIS-97; GLU-256 AND GLN-311</scope>
</reference>
<reference key="11">
    <citation type="journal article" date="2004" name="Hum. Mutat.">
        <title>Mutation analysis of NR2E3 and NRL genes in enhanced S cone syndrome.</title>
        <authorList>
            <person name="Wright A.F."/>
            <person name="Reddick A.C."/>
            <person name="Schwartz S.B."/>
            <person name="Ferguson J.S."/>
            <person name="Aleman T.S."/>
            <person name="Kellner U."/>
            <person name="Jurklies B."/>
            <person name="Schuster A."/>
            <person name="Zrenner E."/>
            <person name="Wissinger B."/>
            <person name="Lennon A."/>
            <person name="Shu X."/>
            <person name="Cideciyan A.V."/>
            <person name="Stone E.M."/>
            <person name="Jacobson S.G."/>
            <person name="Swaroop A."/>
        </authorList>
    </citation>
    <scope>VARIANTS ESCS 67-CYS--GLY-69 DEL; VAL-88; HIS-97; TRP-104; SER-234; GLU-256; PRO-263; GLY-309; GLN-311; PRO-336; VAL-353 AND LYS-407</scope>
</reference>
<reference key="12">
    <citation type="journal article" date="2005" name="Ophthalmology">
        <title>Novel NR2E3 mutations (R104Q, R334G) associated with a mild form of enhanced S-cone syndrome demonstrate compound heterozygosity.</title>
        <authorList>
            <person name="Hayashi T."/>
            <person name="Gekka T."/>
            <person name="Goto-Omoto S."/>
            <person name="Takeuchi T."/>
            <person name="Kubo A."/>
            <person name="Kitahara K."/>
        </authorList>
    </citation>
    <scope>VARIANTS ESCS GLN-104 AND GLY-334</scope>
</reference>
<reference key="13">
    <citation type="journal article" date="2007" name="Am. J. Hum. Genet.">
        <title>Recurrent mutation in the first zinc finger of the orphan nuclear receptor NR2E3 causes autosomal dominant retinitis pigmentosa.</title>
        <authorList>
            <person name="Coppieters F."/>
            <person name="Leroy B.P."/>
            <person name="Beysen D."/>
            <person name="Hellemans J."/>
            <person name="De Bosscher K."/>
            <person name="Haegeman G."/>
            <person name="Robberecht K."/>
            <person name="Wuyts W."/>
            <person name="Coucke P.J."/>
            <person name="De Baere E."/>
        </authorList>
    </citation>
    <scope>VARIANT RP37 ARG-56</scope>
</reference>
<reference key="14">
    <citation type="journal article" date="2008" name="Clin. Genet.">
        <title>Analysis of the involvement of the NR2E3 gene in autosomal recessive retinal dystrophies.</title>
        <authorList>
            <person name="Bernal S."/>
            <person name="Solans T."/>
            <person name="Gamundi M.J."/>
            <person name="Hernan I."/>
            <person name="de Jorge L."/>
            <person name="Carballo M."/>
            <person name="Navarro R."/>
            <person name="Tizzano E."/>
            <person name="Ayuso C."/>
            <person name="Baiget M."/>
        </authorList>
    </citation>
    <scope>VARIANT ESCS GLN-311</scope>
    <scope>VARIANTS RP37 LEU-44; SER-287 AND ARG-324</scope>
    <scope>VARIANTS GLY-140 AND THR-163</scope>
</reference>
<reference key="15">
    <citation type="journal article" date="2009" name="Hum. Mutat.">
        <title>Mutations in NR2E3 can cause dominant or recessive retinal degenerations in the same family.</title>
        <authorList>
            <person name="Escher P."/>
            <person name="Gouras P."/>
            <person name="Roduit R."/>
            <person name="Tiab L."/>
            <person name="Bolay S."/>
            <person name="Delarive T."/>
            <person name="Chen S."/>
            <person name="Tsai C.C."/>
            <person name="Hayashi M."/>
            <person name="Zernant J."/>
            <person name="Merriam J.E."/>
            <person name="Mermod N."/>
            <person name="Allikmets R."/>
            <person name="Munier F.L."/>
            <person name="Schorderet D.F."/>
        </authorList>
    </citation>
    <scope>VARIANT RP37 ARG-56</scope>
    <scope>VARIANT ESCS GLN-311</scope>
</reference>
<name>NR2E3_HUMAN</name>
<gene>
    <name type="primary">NR2E3</name>
    <name type="synonym">PNR</name>
    <name type="synonym">RNR</name>
</gene>
<sequence length="410" mass="44692">METRPTALMSSTVAAAAPAAGAASRKESPGRWGLGEDPTGVSPSLQCRVCGDSSSGKHYGIYACNGCSGFFKRSVRRRLIYRCQVGAGMCPVDKAHRNQCQACRLKKCLQAGMNQDAVQNERQPRSTAQVHLDSMESNTESRPESLVAPPAPAGRSPRGPTPMSAARALGHHFMASLITAETCAKLEPEDADENIDVTSNDPEFPSSPYSSSSPCGLDSIHETSARLLFMAVKWAKNLPVFSSLPFRDQVILLEEAWSELFLLGAIQWSLPLDSCPLLAPPEASAAGGAQGRLTLASMETRVLQETISRFRALAVDPTEFACMKALVLFKPETRGLKDPEHVEALQDQSQVMLSQHSKAHHPSQPVRFGKLLLLLPSLRFITAERIELLFFRKTIGNTPMEKLLCDMFKN</sequence>
<protein>
    <recommendedName>
        <fullName>Photoreceptor-specific nuclear receptor</fullName>
    </recommendedName>
    <alternativeName>
        <fullName>Nuclear receptor subfamily 2 group E member 3</fullName>
    </alternativeName>
    <alternativeName>
        <fullName>Retina-specific nuclear receptor</fullName>
    </alternativeName>
</protein>
<accession>Q9Y5X4</accession>
<accession>B6ZGU0</accession>
<accession>Q9UHM4</accession>
<organism>
    <name type="scientific">Homo sapiens</name>
    <name type="common">Human</name>
    <dbReference type="NCBI Taxonomy" id="9606"/>
    <lineage>
        <taxon>Eukaryota</taxon>
        <taxon>Metazoa</taxon>
        <taxon>Chordata</taxon>
        <taxon>Craniata</taxon>
        <taxon>Vertebrata</taxon>
        <taxon>Euteleostomi</taxon>
        <taxon>Mammalia</taxon>
        <taxon>Eutheria</taxon>
        <taxon>Euarchontoglires</taxon>
        <taxon>Primates</taxon>
        <taxon>Haplorrhini</taxon>
        <taxon>Catarrhini</taxon>
        <taxon>Hominidae</taxon>
        <taxon>Homo</taxon>
    </lineage>
</organism>